<sequence>MASWRCLELARGVGTSILFREAAALGSLKWKRTATAAGASQITNCLHSVASNSKREPRPVKTRVMTQERGSGETQTTADKYEAVIGIETHVQLGTSTKAFCSCPSEYGSEPNANVCPVCMGLPGALPVLNAAVVESGVKLGLALQANIALKSKFDRKQYFYPDLPKGYQISQFDIPIAEKGYIDVDLPVEFGGGHRRFGVTRVHMEEDAGKLIHAGNDRLSGSSSSQVDLNRAGVPLLEVVSEPEMRTGLEAAEYAAELQRMVRYLGISNGNMQEGSMRCDVNISIRPKGREQFGTKVEIKNMNSFSAMQKAIEFEMDRQIALLEEGERIKQETRLWEEGSQQTISMRSKEGLADYRYFPEPDLPEVVLSQEYIDTTRANLPELPDAKRRRYESLGLSMQDTLVLANDSDVAAFFDEVLEKGTEVKQAANWIMGDVAAHLKSIKLTITEAKLTPASLAELIGLIKDGTISGKIAKEILPELIEKGGSAKGAVESKGLSQISDPAVIESMVDKILADNVKQVEAYRGGKTKLQGFFVGQAMKASGGRVNPGLLNKILMAKLNG</sequence>
<reference key="1">
    <citation type="journal article" date="2008" name="Science">
        <title>The Physcomitrella genome reveals evolutionary insights into the conquest of land by plants.</title>
        <authorList>
            <person name="Rensing S.A."/>
            <person name="Lang D."/>
            <person name="Zimmer A.D."/>
            <person name="Terry A."/>
            <person name="Salamov A."/>
            <person name="Shapiro H."/>
            <person name="Nishiyama T."/>
            <person name="Perroud P.-F."/>
            <person name="Lindquist E.A."/>
            <person name="Kamisugi Y."/>
            <person name="Tanahashi T."/>
            <person name="Sakakibara K."/>
            <person name="Fujita T."/>
            <person name="Oishi K."/>
            <person name="Shin-I T."/>
            <person name="Kuroki Y."/>
            <person name="Toyoda A."/>
            <person name="Suzuki Y."/>
            <person name="Hashimoto S.-I."/>
            <person name="Yamaguchi K."/>
            <person name="Sugano S."/>
            <person name="Kohara Y."/>
            <person name="Fujiyama A."/>
            <person name="Anterola A."/>
            <person name="Aoki S."/>
            <person name="Ashton N."/>
            <person name="Barbazuk W.B."/>
            <person name="Barker E."/>
            <person name="Bennetzen J.L."/>
            <person name="Blankenship R."/>
            <person name="Cho S.H."/>
            <person name="Dutcher S.K."/>
            <person name="Estelle M."/>
            <person name="Fawcett J.A."/>
            <person name="Gundlach H."/>
            <person name="Hanada K."/>
            <person name="Heyl A."/>
            <person name="Hicks K.A."/>
            <person name="Hughes J."/>
            <person name="Lohr M."/>
            <person name="Mayer K."/>
            <person name="Melkozernov A."/>
            <person name="Murata T."/>
            <person name="Nelson D.R."/>
            <person name="Pils B."/>
            <person name="Prigge M."/>
            <person name="Reiss B."/>
            <person name="Renner T."/>
            <person name="Rombauts S."/>
            <person name="Rushton P.J."/>
            <person name="Sanderfoot A."/>
            <person name="Schween G."/>
            <person name="Shiu S.-H."/>
            <person name="Stueber K."/>
            <person name="Theodoulou F.L."/>
            <person name="Tu H."/>
            <person name="Van de Peer Y."/>
            <person name="Verrier P.J."/>
            <person name="Waters E."/>
            <person name="Wood A."/>
            <person name="Yang L."/>
            <person name="Cove D."/>
            <person name="Cuming A.C."/>
            <person name="Hasebe M."/>
            <person name="Lucas S."/>
            <person name="Mishler B.D."/>
            <person name="Reski R."/>
            <person name="Grigoriev I.V."/>
            <person name="Quatrano R.S."/>
            <person name="Boore J.L."/>
        </authorList>
    </citation>
    <scope>NUCLEOTIDE SEQUENCE [LARGE SCALE GENOMIC DNA]</scope>
    <source>
        <strain>cv. Gransden 2004</strain>
    </source>
</reference>
<name>GATB_PHYPA</name>
<comment type="function">
    <text evidence="1">Allows the formation of correctly charged Gln-tRNA(Gln) through the transamidation of misacylated Glu-tRNA(Gln) in chloroplasts and mitochondria. The reaction takes place in the presence of glutamine and ATP through an activated gamma-phospho-Glu-tRNA(Gln).</text>
</comment>
<comment type="catalytic activity">
    <reaction evidence="1">
        <text>L-glutamyl-tRNA(Gln) + L-glutamine + ATP + H2O = L-glutaminyl-tRNA(Gln) + L-glutamate + ADP + phosphate + H(+)</text>
        <dbReference type="Rhea" id="RHEA:17521"/>
        <dbReference type="Rhea" id="RHEA-COMP:9681"/>
        <dbReference type="Rhea" id="RHEA-COMP:9684"/>
        <dbReference type="ChEBI" id="CHEBI:15377"/>
        <dbReference type="ChEBI" id="CHEBI:15378"/>
        <dbReference type="ChEBI" id="CHEBI:29985"/>
        <dbReference type="ChEBI" id="CHEBI:30616"/>
        <dbReference type="ChEBI" id="CHEBI:43474"/>
        <dbReference type="ChEBI" id="CHEBI:58359"/>
        <dbReference type="ChEBI" id="CHEBI:78520"/>
        <dbReference type="ChEBI" id="CHEBI:78521"/>
        <dbReference type="ChEBI" id="CHEBI:456216"/>
    </reaction>
</comment>
<comment type="subunit">
    <text evidence="1">Subunit of the heterotrimeric GatCAB amidotransferase (AdT) complex, composed of A, B and C subunits.</text>
</comment>
<comment type="subcellular location">
    <subcellularLocation>
        <location evidence="1">Mitochondrion</location>
    </subcellularLocation>
    <subcellularLocation>
        <location evidence="1">Plastid</location>
        <location evidence="1">Chloroplast</location>
    </subcellularLocation>
</comment>
<comment type="miscellaneous">
    <text evidence="1">This protein may be expected to contain an N-terminal transit peptide but none has been predicted.</text>
</comment>
<comment type="similarity">
    <text evidence="1">Belongs to the GatB/GatE family. GatB subfamily.</text>
</comment>
<protein>
    <recommendedName>
        <fullName evidence="1">Glutamyl-tRNA(Gln) amidotransferase subunit B, chloroplastic/mitochondrial</fullName>
        <shortName evidence="1">Glu-AdT subunit B</shortName>
        <ecNumber evidence="1">6.3.5.-</ecNumber>
    </recommendedName>
</protein>
<gene>
    <name evidence="1" type="primary">GATB</name>
    <name type="ORF">PHYPADRAFT_226103</name>
</gene>
<evidence type="ECO:0000255" key="1">
    <source>
        <dbReference type="HAMAP-Rule" id="MF_03147"/>
    </source>
</evidence>
<evidence type="ECO:0000256" key="2">
    <source>
        <dbReference type="SAM" id="MobiDB-lite"/>
    </source>
</evidence>
<accession>A9TWD9</accession>
<dbReference type="EC" id="6.3.5.-" evidence="1"/>
<dbReference type="EMBL" id="DS545233">
    <property type="protein sequence ID" value="EDQ52278.1"/>
    <property type="molecule type" value="Genomic_DNA"/>
</dbReference>
<dbReference type="RefSeq" id="XP_001782927.1">
    <property type="nucleotide sequence ID" value="XM_001782875.1"/>
</dbReference>
<dbReference type="SMR" id="A9TWD9"/>
<dbReference type="FunCoup" id="A9TWD9">
    <property type="interactions" value="3187"/>
</dbReference>
<dbReference type="PaxDb" id="3218-PP1S345_40V6.1"/>
<dbReference type="EnsemblPlants" id="Pp3c21_8670V3.3">
    <property type="protein sequence ID" value="Pp3c21_8670V3.3"/>
    <property type="gene ID" value="Pp3c21_8670"/>
</dbReference>
<dbReference type="EnsemblPlants" id="Pp3c21_8670V3.4">
    <property type="protein sequence ID" value="Pp3c21_8670V3.4"/>
    <property type="gene ID" value="Pp3c21_8670"/>
</dbReference>
<dbReference type="Gramene" id="Pp3c21_8670V3.3">
    <property type="protein sequence ID" value="Pp3c21_8670V3.3"/>
    <property type="gene ID" value="Pp3c21_8670"/>
</dbReference>
<dbReference type="Gramene" id="Pp3c21_8670V3.4">
    <property type="protein sequence ID" value="Pp3c21_8670V3.4"/>
    <property type="gene ID" value="Pp3c21_8670"/>
</dbReference>
<dbReference type="eggNOG" id="KOG2438">
    <property type="taxonomic scope" value="Eukaryota"/>
</dbReference>
<dbReference type="HOGENOM" id="CLU_019240_0_0_1"/>
<dbReference type="InParanoid" id="A9TWD9"/>
<dbReference type="OMA" id="ARKWWMG"/>
<dbReference type="OrthoDB" id="1722066at2759"/>
<dbReference type="Proteomes" id="UP000006727">
    <property type="component" value="Chromosome 21"/>
</dbReference>
<dbReference type="GO" id="GO:0009507">
    <property type="term" value="C:chloroplast"/>
    <property type="evidence" value="ECO:0007669"/>
    <property type="project" value="UniProtKB-SubCell"/>
</dbReference>
<dbReference type="GO" id="GO:0030956">
    <property type="term" value="C:glutamyl-tRNA(Gln) amidotransferase complex"/>
    <property type="evidence" value="ECO:0007669"/>
    <property type="project" value="UniProtKB-UniRule"/>
</dbReference>
<dbReference type="GO" id="GO:0005739">
    <property type="term" value="C:mitochondrion"/>
    <property type="evidence" value="ECO:0007669"/>
    <property type="project" value="UniProtKB-SubCell"/>
</dbReference>
<dbReference type="GO" id="GO:0005524">
    <property type="term" value="F:ATP binding"/>
    <property type="evidence" value="ECO:0007669"/>
    <property type="project" value="UniProtKB-KW"/>
</dbReference>
<dbReference type="GO" id="GO:0050567">
    <property type="term" value="F:glutaminyl-tRNA synthase (glutamine-hydrolyzing) activity"/>
    <property type="evidence" value="ECO:0000318"/>
    <property type="project" value="GO_Central"/>
</dbReference>
<dbReference type="GO" id="GO:0070681">
    <property type="term" value="P:glutaminyl-tRNAGln biosynthesis via transamidation"/>
    <property type="evidence" value="ECO:0000318"/>
    <property type="project" value="GO_Central"/>
</dbReference>
<dbReference type="GO" id="GO:0032543">
    <property type="term" value="P:mitochondrial translation"/>
    <property type="evidence" value="ECO:0007669"/>
    <property type="project" value="UniProtKB-UniRule"/>
</dbReference>
<dbReference type="FunFam" id="1.10.10.410:FF:000001">
    <property type="entry name" value="Aspartyl/glutamyl-tRNA(Asn/Gln) amidotransferase subunit B"/>
    <property type="match status" value="1"/>
</dbReference>
<dbReference type="FunFam" id="1.10.150.380:FF:000001">
    <property type="entry name" value="Aspartyl/glutamyl-tRNA(Asn/Gln) amidotransferase subunit B"/>
    <property type="match status" value="1"/>
</dbReference>
<dbReference type="Gene3D" id="1.10.10.410">
    <property type="match status" value="1"/>
</dbReference>
<dbReference type="Gene3D" id="1.10.150.380">
    <property type="entry name" value="GatB domain, N-terminal subdomain"/>
    <property type="match status" value="1"/>
</dbReference>
<dbReference type="HAMAP" id="MF_00121">
    <property type="entry name" value="GatB"/>
    <property type="match status" value="1"/>
</dbReference>
<dbReference type="InterPro" id="IPR017959">
    <property type="entry name" value="Asn/Gln-tRNA_amidoTrfase_suB/E"/>
</dbReference>
<dbReference type="InterPro" id="IPR006075">
    <property type="entry name" value="Asn/Gln-tRNA_Trfase_suB/E_cat"/>
</dbReference>
<dbReference type="InterPro" id="IPR018027">
    <property type="entry name" value="Asn/Gln_amidotransferase"/>
</dbReference>
<dbReference type="InterPro" id="IPR003789">
    <property type="entry name" value="Asn/Gln_tRNA_amidoTrase-B-like"/>
</dbReference>
<dbReference type="InterPro" id="IPR004413">
    <property type="entry name" value="GatB"/>
</dbReference>
<dbReference type="InterPro" id="IPR042114">
    <property type="entry name" value="GatB_C_1"/>
</dbReference>
<dbReference type="InterPro" id="IPR023168">
    <property type="entry name" value="GatB_Yqey_C_2"/>
</dbReference>
<dbReference type="InterPro" id="IPR017958">
    <property type="entry name" value="Gln-tRNA_amidoTrfase_suB_CS"/>
</dbReference>
<dbReference type="InterPro" id="IPR014746">
    <property type="entry name" value="Gln_synth/guanido_kin_cat_dom"/>
</dbReference>
<dbReference type="NCBIfam" id="TIGR00133">
    <property type="entry name" value="gatB"/>
    <property type="match status" value="1"/>
</dbReference>
<dbReference type="NCBIfam" id="NF004012">
    <property type="entry name" value="PRK05477.1-2"/>
    <property type="match status" value="1"/>
</dbReference>
<dbReference type="NCBIfam" id="NF004014">
    <property type="entry name" value="PRK05477.1-4"/>
    <property type="match status" value="1"/>
</dbReference>
<dbReference type="PANTHER" id="PTHR11659">
    <property type="entry name" value="GLUTAMYL-TRNA GLN AMIDOTRANSFERASE SUBUNIT B MITOCHONDRIAL AND PROKARYOTIC PET112-RELATED"/>
    <property type="match status" value="1"/>
</dbReference>
<dbReference type="PANTHER" id="PTHR11659:SF0">
    <property type="entry name" value="GLUTAMYL-TRNA(GLN) AMIDOTRANSFERASE SUBUNIT B, MITOCHONDRIAL"/>
    <property type="match status" value="1"/>
</dbReference>
<dbReference type="Pfam" id="PF02934">
    <property type="entry name" value="GatB_N"/>
    <property type="match status" value="1"/>
</dbReference>
<dbReference type="Pfam" id="PF02637">
    <property type="entry name" value="GatB_Yqey"/>
    <property type="match status" value="1"/>
</dbReference>
<dbReference type="SMART" id="SM00845">
    <property type="entry name" value="GatB_Yqey"/>
    <property type="match status" value="1"/>
</dbReference>
<dbReference type="SUPFAM" id="SSF89095">
    <property type="entry name" value="GatB/YqeY motif"/>
    <property type="match status" value="1"/>
</dbReference>
<dbReference type="SUPFAM" id="SSF55931">
    <property type="entry name" value="Glutamine synthetase/guanido kinase"/>
    <property type="match status" value="1"/>
</dbReference>
<dbReference type="PROSITE" id="PS01234">
    <property type="entry name" value="GATB"/>
    <property type="match status" value="1"/>
</dbReference>
<organism>
    <name type="scientific">Physcomitrium patens</name>
    <name type="common">Spreading-leaved earth moss</name>
    <name type="synonym">Physcomitrella patens</name>
    <dbReference type="NCBI Taxonomy" id="3218"/>
    <lineage>
        <taxon>Eukaryota</taxon>
        <taxon>Viridiplantae</taxon>
        <taxon>Streptophyta</taxon>
        <taxon>Embryophyta</taxon>
        <taxon>Bryophyta</taxon>
        <taxon>Bryophytina</taxon>
        <taxon>Bryopsida</taxon>
        <taxon>Funariidae</taxon>
        <taxon>Funariales</taxon>
        <taxon>Funariaceae</taxon>
        <taxon>Physcomitrium</taxon>
    </lineage>
</organism>
<keyword id="KW-0067">ATP-binding</keyword>
<keyword id="KW-0150">Chloroplast</keyword>
<keyword id="KW-0436">Ligase</keyword>
<keyword id="KW-0496">Mitochondrion</keyword>
<keyword id="KW-0547">Nucleotide-binding</keyword>
<keyword id="KW-0934">Plastid</keyword>
<keyword id="KW-0648">Protein biosynthesis</keyword>
<keyword id="KW-1185">Reference proteome</keyword>
<proteinExistence type="inferred from homology"/>
<feature type="chain" id="PRO_0000413233" description="Glutamyl-tRNA(Gln) amidotransferase subunit B, chloroplastic/mitochondrial">
    <location>
        <begin position="1"/>
        <end position="562"/>
    </location>
</feature>
<feature type="region of interest" description="Disordered" evidence="2">
    <location>
        <begin position="48"/>
        <end position="76"/>
    </location>
</feature>
<feature type="compositionally biased region" description="Polar residues" evidence="2">
    <location>
        <begin position="64"/>
        <end position="76"/>
    </location>
</feature>